<evidence type="ECO:0000250" key="1">
    <source>
        <dbReference type="UniProtKB" id="A0A0D4WTV1"/>
    </source>
</evidence>
<evidence type="ECO:0000250" key="2">
    <source>
        <dbReference type="UniProtKB" id="A0A0D4WV12"/>
    </source>
</evidence>
<evidence type="ECO:0000250" key="3">
    <source>
        <dbReference type="UniProtKB" id="P0CE80"/>
    </source>
</evidence>
<evidence type="ECO:0000250" key="4">
    <source>
        <dbReference type="UniProtKB" id="Q4ZFU2"/>
    </source>
</evidence>
<evidence type="ECO:0000250" key="5">
    <source>
        <dbReference type="UniProtKB" id="Q8I914"/>
    </source>
</evidence>
<evidence type="ECO:0000303" key="6">
    <source>
    </source>
</evidence>
<evidence type="ECO:0000305" key="7"/>
<evidence type="ECO:0000305" key="8">
    <source>
    </source>
</evidence>
<comment type="function">
    <text evidence="1 3">Dermonecrotic toxins cleave the phosphodiester linkage between the phosphate and headgroup of certain phospholipids (sphingolipid and lysolipid substrates), forming an alcohol (often choline) and a cyclic phosphate (By similarity). This toxin acts on sphingomyelin (SM) (By similarity). It may also act on ceramide phosphoethanolamine (CPE), lysophosphatidylcholine (LPC) and lysophosphatidylethanolamine (LPE), but not on lysophosphatidylserine (LPS), and lysophosphatidylglycerol (LPG) (By similarity). It acts by transphosphatidylation, releasing exclusively cyclic phosphate products as second products (By similarity). Induces dermonecrosis, hemolysis, increased vascular permeability, edema, inflammatory response, and platelet aggregation (By similarity).</text>
</comment>
<comment type="catalytic activity">
    <reaction evidence="1">
        <text>an N-(acyl)-sphingosylphosphocholine = an N-(acyl)-sphingosyl-1,3-cyclic phosphate + choline</text>
        <dbReference type="Rhea" id="RHEA:60652"/>
        <dbReference type="ChEBI" id="CHEBI:15354"/>
        <dbReference type="ChEBI" id="CHEBI:64583"/>
        <dbReference type="ChEBI" id="CHEBI:143892"/>
    </reaction>
</comment>
<comment type="catalytic activity">
    <reaction evidence="1">
        <text>an N-(acyl)-sphingosylphosphoethanolamine = an N-(acyl)-sphingosyl-1,3-cyclic phosphate + ethanolamine</text>
        <dbReference type="Rhea" id="RHEA:60648"/>
        <dbReference type="ChEBI" id="CHEBI:57603"/>
        <dbReference type="ChEBI" id="CHEBI:143891"/>
        <dbReference type="ChEBI" id="CHEBI:143892"/>
    </reaction>
</comment>
<comment type="catalytic activity">
    <reaction evidence="1">
        <text>a 1-acyl-sn-glycero-3-phosphocholine = a 1-acyl-sn-glycero-2,3-cyclic phosphate + choline</text>
        <dbReference type="Rhea" id="RHEA:60700"/>
        <dbReference type="ChEBI" id="CHEBI:15354"/>
        <dbReference type="ChEBI" id="CHEBI:58168"/>
        <dbReference type="ChEBI" id="CHEBI:143947"/>
    </reaction>
</comment>
<comment type="catalytic activity">
    <reaction evidence="1">
        <text>a 1-acyl-sn-glycero-3-phosphoethanolamine = a 1-acyl-sn-glycero-2,3-cyclic phosphate + ethanolamine</text>
        <dbReference type="Rhea" id="RHEA:60704"/>
        <dbReference type="ChEBI" id="CHEBI:57603"/>
        <dbReference type="ChEBI" id="CHEBI:64381"/>
        <dbReference type="ChEBI" id="CHEBI:143947"/>
    </reaction>
</comment>
<comment type="cofactor">
    <cofactor evidence="5">
        <name>Mg(2+)</name>
        <dbReference type="ChEBI" id="CHEBI:18420"/>
    </cofactor>
    <text evidence="5">Binds 1 Mg(2+) ion per subunit.</text>
</comment>
<comment type="subcellular location">
    <subcellularLocation>
        <location evidence="8">Secreted</location>
    </subcellularLocation>
</comment>
<comment type="tissue specificity">
    <text evidence="8">Expressed by the venom gland.</text>
</comment>
<comment type="similarity">
    <text evidence="7">Belongs to the arthropod phospholipase D family. Class II subfamily.</text>
</comment>
<comment type="caution">
    <text evidence="1 2 4">The most common activity assay for dermonecrotic toxins detects enzymatic activity by monitoring choline release from substrate. Liberation of choline from sphingomyelin (SM) or lysophosphatidylcholine (LPC) is commonly assumed to result from substrate hydrolysis, giving either ceramide-1-phosphate (C1P) or lysophosphatidic acid (LPA), respectively, as a second product. However, two studies from Lajoie and colleagues (2013 and 2015) report the observation of exclusive formation of cyclic phosphate products as second products, resulting from intramolecular transphosphatidylation. Cyclic phosphates have vastly different biological properties from their monoester counterparts, and they may be relevant to the pathology of brown spider envenomation.</text>
</comment>
<sequence length="274" mass="31683">WIMGHMVNAIEQVDEFLNLGANAIEFDIDFDKDGIAQITHHGIPCDCGRKCTKKAIFTEYLDNIRQVTTPDDPKLREQLVLLALDLKLQRISSAKAYRAGEDVAKKLLDHYWQRGNSRARAYILLNIPLVEDYEFIRAFKDTLKNEGYESYNDKVGINFTGNEDLDKIRDVLEILGIHKQVWQADGITSCFARGTERLKEALEKRDTPGYSYINKVYAWTLVRKSIMRRSLRLGVDGVMSNNPDRVIKVLKEKEFADKFRLATYNDNPWEKFRG</sequence>
<organism>
    <name type="scientific">Sicarius cf. damarensis (strain GJB-2008)</name>
    <name type="common">Six-eyed sand spider</name>
    <dbReference type="NCBI Taxonomy" id="575956"/>
    <lineage>
        <taxon>Eukaryota</taxon>
        <taxon>Metazoa</taxon>
        <taxon>Ecdysozoa</taxon>
        <taxon>Arthropoda</taxon>
        <taxon>Chelicerata</taxon>
        <taxon>Arachnida</taxon>
        <taxon>Araneae</taxon>
        <taxon>Araneomorphae</taxon>
        <taxon>Haplogynae</taxon>
        <taxon>Scytodoidea</taxon>
        <taxon>Sicariidae</taxon>
        <taxon>Sicarius</taxon>
    </lineage>
</organism>
<protein>
    <recommendedName>
        <fullName evidence="6">Dermonecrotic toxin SdSicTox-betaIIB1bxiii</fullName>
        <ecNumber evidence="4">4.6.1.-</ecNumber>
    </recommendedName>
    <alternativeName>
        <fullName>Phospholipase D</fullName>
        <shortName>PLD</shortName>
    </alternativeName>
    <alternativeName>
        <fullName>Sphingomyelin phosphodiesterase D</fullName>
        <shortName>SMD</shortName>
        <shortName>SMase D</shortName>
        <shortName>Sphingomyelinase D</shortName>
    </alternativeName>
</protein>
<reference key="1">
    <citation type="journal article" date="2009" name="Mol. Biol. Evol.">
        <title>Molecular evolution, functional variation, and proposed nomenclature of the gene family that includes sphingomyelinase D in sicariid spider venoms.</title>
        <authorList>
            <person name="Binford G.J."/>
            <person name="Bodner M.R."/>
            <person name="Cordes M.H."/>
            <person name="Baldwin K.L."/>
            <person name="Rynerson M.R."/>
            <person name="Burns S.N."/>
            <person name="Zobel-Thropp P.A."/>
        </authorList>
    </citation>
    <scope>NUCLEOTIDE SEQUENCE [MRNA]</scope>
    <scope>NOMENCLATURE</scope>
    <source>
        <tissue>Venom gland</tissue>
    </source>
</reference>
<proteinExistence type="evidence at transcript level"/>
<keyword id="KW-0204">Cytolysis</keyword>
<keyword id="KW-1061">Dermonecrotic toxin</keyword>
<keyword id="KW-1015">Disulfide bond</keyword>
<keyword id="KW-0354">Hemolysis</keyword>
<keyword id="KW-0442">Lipid degradation</keyword>
<keyword id="KW-0443">Lipid metabolism</keyword>
<keyword id="KW-0456">Lyase</keyword>
<keyword id="KW-0460">Magnesium</keyword>
<keyword id="KW-0479">Metal-binding</keyword>
<keyword id="KW-0964">Secreted</keyword>
<keyword id="KW-0800">Toxin</keyword>
<name>B2KBD_SICCD</name>
<dbReference type="EC" id="4.6.1.-" evidence="4"/>
<dbReference type="EMBL" id="FJ171522">
    <property type="protein sequence ID" value="ACN49018.1"/>
    <property type="molecule type" value="mRNA"/>
</dbReference>
<dbReference type="SMR" id="C0JB87"/>
<dbReference type="GO" id="GO:0005576">
    <property type="term" value="C:extracellular region"/>
    <property type="evidence" value="ECO:0007669"/>
    <property type="project" value="UniProtKB-SubCell"/>
</dbReference>
<dbReference type="GO" id="GO:0016829">
    <property type="term" value="F:lyase activity"/>
    <property type="evidence" value="ECO:0007669"/>
    <property type="project" value="UniProtKB-KW"/>
</dbReference>
<dbReference type="GO" id="GO:0046872">
    <property type="term" value="F:metal ion binding"/>
    <property type="evidence" value="ECO:0007669"/>
    <property type="project" value="UniProtKB-KW"/>
</dbReference>
<dbReference type="GO" id="GO:0008081">
    <property type="term" value="F:phosphoric diester hydrolase activity"/>
    <property type="evidence" value="ECO:0007669"/>
    <property type="project" value="InterPro"/>
</dbReference>
<dbReference type="GO" id="GO:0090729">
    <property type="term" value="F:toxin activity"/>
    <property type="evidence" value="ECO:0007669"/>
    <property type="project" value="UniProtKB-KW"/>
</dbReference>
<dbReference type="GO" id="GO:0031640">
    <property type="term" value="P:killing of cells of another organism"/>
    <property type="evidence" value="ECO:0007669"/>
    <property type="project" value="UniProtKB-KW"/>
</dbReference>
<dbReference type="GO" id="GO:0016042">
    <property type="term" value="P:lipid catabolic process"/>
    <property type="evidence" value="ECO:0007669"/>
    <property type="project" value="UniProtKB-KW"/>
</dbReference>
<dbReference type="CDD" id="cd08576">
    <property type="entry name" value="GDPD_like_SMaseD_PLD"/>
    <property type="match status" value="1"/>
</dbReference>
<dbReference type="Gene3D" id="3.20.20.190">
    <property type="entry name" value="Phosphatidylinositol (PI) phosphodiesterase"/>
    <property type="match status" value="1"/>
</dbReference>
<dbReference type="InterPro" id="IPR017946">
    <property type="entry name" value="PLC-like_Pdiesterase_TIM-brl"/>
</dbReference>
<dbReference type="SUPFAM" id="SSF51695">
    <property type="entry name" value="PLC-like phosphodiesterases"/>
    <property type="match status" value="1"/>
</dbReference>
<feature type="chain" id="PRO_0000392898" description="Dermonecrotic toxin SdSicTox-betaIIB1bxiii">
    <location>
        <begin position="1" status="less than"/>
        <end position="274"/>
    </location>
</feature>
<feature type="active site" evidence="5">
    <location>
        <position position="5"/>
    </location>
</feature>
<feature type="active site" description="Nucleophile" evidence="5">
    <location>
        <position position="41"/>
    </location>
</feature>
<feature type="binding site" evidence="5">
    <location>
        <position position="25"/>
    </location>
    <ligand>
        <name>Mg(2+)</name>
        <dbReference type="ChEBI" id="CHEBI:18420"/>
    </ligand>
</feature>
<feature type="binding site" evidence="5">
    <location>
        <position position="27"/>
    </location>
    <ligand>
        <name>Mg(2+)</name>
        <dbReference type="ChEBI" id="CHEBI:18420"/>
    </ligand>
</feature>
<feature type="binding site" evidence="5">
    <location>
        <position position="85"/>
    </location>
    <ligand>
        <name>Mg(2+)</name>
        <dbReference type="ChEBI" id="CHEBI:18420"/>
    </ligand>
</feature>
<feature type="disulfide bond" evidence="3">
    <location>
        <begin position="45"/>
        <end position="51"/>
    </location>
</feature>
<feature type="disulfide bond" evidence="3">
    <location>
        <begin position="47"/>
        <end position="190"/>
    </location>
</feature>
<feature type="non-terminal residue">
    <location>
        <position position="1"/>
    </location>
</feature>
<accession>C0JB87</accession>